<organism>
    <name type="scientific">Thermosynechococcus vestitus (strain NIES-2133 / IAM M-273 / BP-1)</name>
    <dbReference type="NCBI Taxonomy" id="197221"/>
    <lineage>
        <taxon>Bacteria</taxon>
        <taxon>Bacillati</taxon>
        <taxon>Cyanobacteriota</taxon>
        <taxon>Cyanophyceae</taxon>
        <taxon>Acaryochloridales</taxon>
        <taxon>Thermosynechococcaceae</taxon>
        <taxon>Thermosynechococcus</taxon>
    </lineage>
</organism>
<evidence type="ECO:0000255" key="1">
    <source>
        <dbReference type="HAMAP-Rule" id="MF_00108"/>
    </source>
</evidence>
<protein>
    <recommendedName>
        <fullName evidence="1">2-C-methyl-D-erythritol 4-phosphate cytidylyltransferase</fullName>
        <ecNumber evidence="1">2.7.7.60</ecNumber>
    </recommendedName>
    <alternativeName>
        <fullName evidence="1">4-diphosphocytidyl-2C-methyl-D-erythritol synthase</fullName>
    </alternativeName>
    <alternativeName>
        <fullName evidence="1">MEP cytidylyltransferase</fullName>
        <shortName evidence="1">MCT</shortName>
    </alternativeName>
</protein>
<dbReference type="EC" id="2.7.7.60" evidence="1"/>
<dbReference type="EMBL" id="BA000039">
    <property type="protein sequence ID" value="BAC08157.1"/>
    <property type="molecule type" value="Genomic_DNA"/>
</dbReference>
<dbReference type="RefSeq" id="NP_681395.1">
    <property type="nucleotide sequence ID" value="NC_004113.1"/>
</dbReference>
<dbReference type="RefSeq" id="WP_011056453.1">
    <property type="nucleotide sequence ID" value="NC_004113.1"/>
</dbReference>
<dbReference type="SMR" id="Q8DL91"/>
<dbReference type="STRING" id="197221.gene:10747195"/>
<dbReference type="EnsemblBacteria" id="BAC08157">
    <property type="protein sequence ID" value="BAC08157"/>
    <property type="gene ID" value="BAC08157"/>
</dbReference>
<dbReference type="KEGG" id="tel:tlr0605"/>
<dbReference type="PATRIC" id="fig|197221.4.peg.640"/>
<dbReference type="eggNOG" id="COG1211">
    <property type="taxonomic scope" value="Bacteria"/>
</dbReference>
<dbReference type="UniPathway" id="UPA00056">
    <property type="reaction ID" value="UER00093"/>
</dbReference>
<dbReference type="Proteomes" id="UP000000440">
    <property type="component" value="Chromosome"/>
</dbReference>
<dbReference type="GO" id="GO:0050518">
    <property type="term" value="F:2-C-methyl-D-erythritol 4-phosphate cytidylyltransferase activity"/>
    <property type="evidence" value="ECO:0007669"/>
    <property type="project" value="UniProtKB-UniRule"/>
</dbReference>
<dbReference type="GO" id="GO:0019288">
    <property type="term" value="P:isopentenyl diphosphate biosynthetic process, methylerythritol 4-phosphate pathway"/>
    <property type="evidence" value="ECO:0007669"/>
    <property type="project" value="UniProtKB-UniRule"/>
</dbReference>
<dbReference type="CDD" id="cd02516">
    <property type="entry name" value="CDP-ME_synthetase"/>
    <property type="match status" value="1"/>
</dbReference>
<dbReference type="FunFam" id="3.90.550.10:FF:000003">
    <property type="entry name" value="2-C-methyl-D-erythritol 4-phosphate cytidylyltransferase"/>
    <property type="match status" value="1"/>
</dbReference>
<dbReference type="Gene3D" id="3.90.550.10">
    <property type="entry name" value="Spore Coat Polysaccharide Biosynthesis Protein SpsA, Chain A"/>
    <property type="match status" value="1"/>
</dbReference>
<dbReference type="HAMAP" id="MF_00108">
    <property type="entry name" value="IspD"/>
    <property type="match status" value="1"/>
</dbReference>
<dbReference type="InterPro" id="IPR001228">
    <property type="entry name" value="IspD"/>
</dbReference>
<dbReference type="InterPro" id="IPR034683">
    <property type="entry name" value="IspD/TarI"/>
</dbReference>
<dbReference type="InterPro" id="IPR050088">
    <property type="entry name" value="IspD/TarI_cytidylyltransf_bact"/>
</dbReference>
<dbReference type="InterPro" id="IPR018294">
    <property type="entry name" value="ISPD_synthase_CS"/>
</dbReference>
<dbReference type="InterPro" id="IPR029044">
    <property type="entry name" value="Nucleotide-diphossugar_trans"/>
</dbReference>
<dbReference type="NCBIfam" id="TIGR00453">
    <property type="entry name" value="ispD"/>
    <property type="match status" value="1"/>
</dbReference>
<dbReference type="PANTHER" id="PTHR32125">
    <property type="entry name" value="2-C-METHYL-D-ERYTHRITOL 4-PHOSPHATE CYTIDYLYLTRANSFERASE, CHLOROPLASTIC"/>
    <property type="match status" value="1"/>
</dbReference>
<dbReference type="PANTHER" id="PTHR32125:SF4">
    <property type="entry name" value="2-C-METHYL-D-ERYTHRITOL 4-PHOSPHATE CYTIDYLYLTRANSFERASE, CHLOROPLASTIC"/>
    <property type="match status" value="1"/>
</dbReference>
<dbReference type="Pfam" id="PF01128">
    <property type="entry name" value="IspD"/>
    <property type="match status" value="1"/>
</dbReference>
<dbReference type="SUPFAM" id="SSF53448">
    <property type="entry name" value="Nucleotide-diphospho-sugar transferases"/>
    <property type="match status" value="1"/>
</dbReference>
<dbReference type="PROSITE" id="PS01295">
    <property type="entry name" value="ISPD"/>
    <property type="match status" value="1"/>
</dbReference>
<name>ISPD_THEVB</name>
<comment type="function">
    <text evidence="1">Catalyzes the formation of 4-diphosphocytidyl-2-C-methyl-D-erythritol from CTP and 2-C-methyl-D-erythritol 4-phosphate (MEP).</text>
</comment>
<comment type="catalytic activity">
    <reaction evidence="1">
        <text>2-C-methyl-D-erythritol 4-phosphate + CTP + H(+) = 4-CDP-2-C-methyl-D-erythritol + diphosphate</text>
        <dbReference type="Rhea" id="RHEA:13429"/>
        <dbReference type="ChEBI" id="CHEBI:15378"/>
        <dbReference type="ChEBI" id="CHEBI:33019"/>
        <dbReference type="ChEBI" id="CHEBI:37563"/>
        <dbReference type="ChEBI" id="CHEBI:57823"/>
        <dbReference type="ChEBI" id="CHEBI:58262"/>
        <dbReference type="EC" id="2.7.7.60"/>
    </reaction>
</comment>
<comment type="pathway">
    <text evidence="1">Isoprenoid biosynthesis; isopentenyl diphosphate biosynthesis via DXP pathway; isopentenyl diphosphate from 1-deoxy-D-xylulose 5-phosphate: step 2/6.</text>
</comment>
<comment type="similarity">
    <text evidence="1">Belongs to the IspD/TarI cytidylyltransferase family. IspD subfamily.</text>
</comment>
<sequence length="234" mass="25593">MHILIPAAGMGKRMGASHNKLRLQLLGKPLLAWTLAAVAAAEAIEWIGVIGQPEDFPIWEALLEDLNLRQPVHLITGGETRQASVFHGLQALPKTAEQVLIHDGARCLATPDLINRCAQALGTYAGLIAAVPVKDTIKIVNREGVVVQTPERDSLWAAQTPQGFRVEPLRIAHEMAVAKGWEVTDDAALFERLGYAVHIVLGEETNLKITTPSDLPLAERILQHRREQEQDTLG</sequence>
<proteinExistence type="inferred from homology"/>
<keyword id="KW-0414">Isoprene biosynthesis</keyword>
<keyword id="KW-0548">Nucleotidyltransferase</keyword>
<keyword id="KW-1185">Reference proteome</keyword>
<keyword id="KW-0808">Transferase</keyword>
<gene>
    <name evidence="1" type="primary">ispD</name>
    <name type="ordered locus">tlr0605</name>
</gene>
<reference key="1">
    <citation type="journal article" date="2002" name="DNA Res.">
        <title>Complete genome structure of the thermophilic cyanobacterium Thermosynechococcus elongatus BP-1.</title>
        <authorList>
            <person name="Nakamura Y."/>
            <person name="Kaneko T."/>
            <person name="Sato S."/>
            <person name="Ikeuchi M."/>
            <person name="Katoh H."/>
            <person name="Sasamoto S."/>
            <person name="Watanabe A."/>
            <person name="Iriguchi M."/>
            <person name="Kawashima K."/>
            <person name="Kimura T."/>
            <person name="Kishida Y."/>
            <person name="Kiyokawa C."/>
            <person name="Kohara M."/>
            <person name="Matsumoto M."/>
            <person name="Matsuno A."/>
            <person name="Nakazaki N."/>
            <person name="Shimpo S."/>
            <person name="Sugimoto M."/>
            <person name="Takeuchi C."/>
            <person name="Yamada M."/>
            <person name="Tabata S."/>
        </authorList>
    </citation>
    <scope>NUCLEOTIDE SEQUENCE [LARGE SCALE GENOMIC DNA]</scope>
    <source>
        <strain>NIES-2133 / IAM M-273 / BP-1</strain>
    </source>
</reference>
<accession>Q8DL91</accession>
<feature type="chain" id="PRO_0000075634" description="2-C-methyl-D-erythritol 4-phosphate cytidylyltransferase">
    <location>
        <begin position="1"/>
        <end position="234"/>
    </location>
</feature>
<feature type="site" description="Transition state stabilizer" evidence="1">
    <location>
        <position position="13"/>
    </location>
</feature>
<feature type="site" description="Transition state stabilizer" evidence="1">
    <location>
        <position position="20"/>
    </location>
</feature>
<feature type="site" description="Positions MEP for the nucleophilic attack" evidence="1">
    <location>
        <position position="152"/>
    </location>
</feature>
<feature type="site" description="Positions MEP for the nucleophilic attack" evidence="1">
    <location>
        <position position="208"/>
    </location>
</feature>